<name>MEND_SHEON</name>
<proteinExistence type="inferred from homology"/>
<sequence>MRTENTATLNLMWGALILEELARLGVQHVCMAPGSRSTPLTLAAAKQTKLKRHLHFDERGLGFMALGLAKASSAPVAIITTSGTAVANLYPAIVEAWLTHVPLIVLSGDRPPELLGCGANQAIVQPAIFANYAQQVNLPTPDAHIAPQMLLTTLDEAVANQTRPVHINCMYREPLYPSELTATILDSESPYLKPLQTWLQQARPYTIYGKREQLSHPSEDAIMRFVHGKGVIIAGTLTPEQDPQQLIALSQKIGWPLLTDAQSQLRQHPAAIGNIDQLLQHPKARNLLQEADRVLVFGGRLLSKRLIAYLAEQNWHSYWQVLPQQDRLDPSHNAKHIWHANAAQFAQLNWYRSSSANWANTLITYNDDLHHLFVRNIDQGEFGEAQVIRAIANTRPLEQQLFIGNSLPVRLYDMYAPVSCCTATTYTNRGASGIDGLLATACGIAAHQGKPTSLIIGDLSQLHDLNSFAIARSLTSPLVIIILNNDGGNIFNLLPVPNEELRSDYYRLSHGLEFGYAAAMFNLPYNQVDNLADFQTCYNEALDFQGASVIEVTVSQHQASEQIAALNLWVKQS</sequence>
<comment type="function">
    <text evidence="1">Catalyzes the thiamine diphosphate-dependent decarboxylation of 2-oxoglutarate and the subsequent addition of the resulting succinic semialdehyde-thiamine pyrophosphate anion to isochorismate to yield 2-succinyl-5-enolpyruvyl-6-hydroxy-3-cyclohexene-1-carboxylate (SEPHCHC).</text>
</comment>
<comment type="catalytic activity">
    <reaction evidence="1">
        <text>isochorismate + 2-oxoglutarate + H(+) = 5-enolpyruvoyl-6-hydroxy-2-succinyl-cyclohex-3-ene-1-carboxylate + CO2</text>
        <dbReference type="Rhea" id="RHEA:25593"/>
        <dbReference type="ChEBI" id="CHEBI:15378"/>
        <dbReference type="ChEBI" id="CHEBI:16526"/>
        <dbReference type="ChEBI" id="CHEBI:16810"/>
        <dbReference type="ChEBI" id="CHEBI:29780"/>
        <dbReference type="ChEBI" id="CHEBI:58818"/>
        <dbReference type="EC" id="2.2.1.9"/>
    </reaction>
</comment>
<comment type="cofactor">
    <cofactor evidence="1">
        <name>Mg(2+)</name>
        <dbReference type="ChEBI" id="CHEBI:18420"/>
    </cofactor>
    <cofactor evidence="1">
        <name>Mn(2+)</name>
        <dbReference type="ChEBI" id="CHEBI:29035"/>
    </cofactor>
</comment>
<comment type="cofactor">
    <cofactor evidence="1">
        <name>thiamine diphosphate</name>
        <dbReference type="ChEBI" id="CHEBI:58937"/>
    </cofactor>
    <text evidence="1">Binds 1 thiamine pyrophosphate per subunit.</text>
</comment>
<comment type="pathway">
    <text evidence="1">Quinol/quinone metabolism; 1,4-dihydroxy-2-naphthoate biosynthesis; 1,4-dihydroxy-2-naphthoate from chorismate: step 2/7.</text>
</comment>
<comment type="pathway">
    <text evidence="1">Quinol/quinone metabolism; menaquinone biosynthesis.</text>
</comment>
<comment type="subunit">
    <text evidence="1">Homodimer.</text>
</comment>
<comment type="similarity">
    <text evidence="1">Belongs to the TPP enzyme family. MenD subfamily.</text>
</comment>
<keyword id="KW-0460">Magnesium</keyword>
<keyword id="KW-0464">Manganese</keyword>
<keyword id="KW-0474">Menaquinone biosynthesis</keyword>
<keyword id="KW-0479">Metal-binding</keyword>
<keyword id="KW-1185">Reference proteome</keyword>
<keyword id="KW-0786">Thiamine pyrophosphate</keyword>
<keyword id="KW-0808">Transferase</keyword>
<dbReference type="EC" id="2.2.1.9" evidence="1"/>
<dbReference type="EMBL" id="AE014299">
    <property type="protein sequence ID" value="AAN57533.1"/>
    <property type="molecule type" value="Genomic_DNA"/>
</dbReference>
<dbReference type="RefSeq" id="NP_720089.1">
    <property type="nucleotide sequence ID" value="NC_004347.2"/>
</dbReference>
<dbReference type="RefSeq" id="WP_011074176.1">
    <property type="nucleotide sequence ID" value="NC_004347.2"/>
</dbReference>
<dbReference type="SMR" id="Q8E8T4"/>
<dbReference type="STRING" id="211586.SO_4573"/>
<dbReference type="PaxDb" id="211586-SO_4573"/>
<dbReference type="KEGG" id="son:SO_4573"/>
<dbReference type="PATRIC" id="fig|211586.12.peg.4432"/>
<dbReference type="eggNOG" id="COG1165">
    <property type="taxonomic scope" value="Bacteria"/>
</dbReference>
<dbReference type="HOGENOM" id="CLU_006051_3_0_6"/>
<dbReference type="OrthoDB" id="9791859at2"/>
<dbReference type="PhylomeDB" id="Q8E8T4"/>
<dbReference type="BioCyc" id="SONE211586:G1GMP-4225-MONOMER"/>
<dbReference type="UniPathway" id="UPA00079"/>
<dbReference type="UniPathway" id="UPA01057">
    <property type="reaction ID" value="UER00164"/>
</dbReference>
<dbReference type="Proteomes" id="UP000008186">
    <property type="component" value="Chromosome"/>
</dbReference>
<dbReference type="GO" id="GO:0070204">
    <property type="term" value="F:2-succinyl-5-enolpyruvyl-6-hydroxy-3-cyclohexene-1-carboxylic-acid synthase activity"/>
    <property type="evidence" value="ECO:0007669"/>
    <property type="project" value="UniProtKB-UniRule"/>
</dbReference>
<dbReference type="GO" id="GO:0000287">
    <property type="term" value="F:magnesium ion binding"/>
    <property type="evidence" value="ECO:0007669"/>
    <property type="project" value="UniProtKB-UniRule"/>
</dbReference>
<dbReference type="GO" id="GO:0030145">
    <property type="term" value="F:manganese ion binding"/>
    <property type="evidence" value="ECO:0007669"/>
    <property type="project" value="UniProtKB-UniRule"/>
</dbReference>
<dbReference type="GO" id="GO:0030976">
    <property type="term" value="F:thiamine pyrophosphate binding"/>
    <property type="evidence" value="ECO:0007669"/>
    <property type="project" value="UniProtKB-UniRule"/>
</dbReference>
<dbReference type="GO" id="GO:0009234">
    <property type="term" value="P:menaquinone biosynthetic process"/>
    <property type="evidence" value="ECO:0007669"/>
    <property type="project" value="UniProtKB-UniRule"/>
</dbReference>
<dbReference type="CDD" id="cd07037">
    <property type="entry name" value="TPP_PYR_MenD"/>
    <property type="match status" value="1"/>
</dbReference>
<dbReference type="CDD" id="cd02009">
    <property type="entry name" value="TPP_SHCHC_synthase"/>
    <property type="match status" value="1"/>
</dbReference>
<dbReference type="Gene3D" id="3.40.50.970">
    <property type="match status" value="2"/>
</dbReference>
<dbReference type="Gene3D" id="3.40.50.1220">
    <property type="entry name" value="TPP-binding domain"/>
    <property type="match status" value="1"/>
</dbReference>
<dbReference type="HAMAP" id="MF_01659">
    <property type="entry name" value="MenD"/>
    <property type="match status" value="1"/>
</dbReference>
<dbReference type="InterPro" id="IPR029035">
    <property type="entry name" value="DHS-like_NAD/FAD-binding_dom"/>
</dbReference>
<dbReference type="InterPro" id="IPR004433">
    <property type="entry name" value="MenaQ_synth_MenD"/>
</dbReference>
<dbReference type="InterPro" id="IPR032264">
    <property type="entry name" value="MenD_middle"/>
</dbReference>
<dbReference type="InterPro" id="IPR029061">
    <property type="entry name" value="THDP-binding"/>
</dbReference>
<dbReference type="InterPro" id="IPR012001">
    <property type="entry name" value="Thiamin_PyroP_enz_TPP-bd_dom"/>
</dbReference>
<dbReference type="InterPro" id="IPR011766">
    <property type="entry name" value="TPP_enzyme_TPP-bd"/>
</dbReference>
<dbReference type="NCBIfam" id="TIGR00173">
    <property type="entry name" value="menD"/>
    <property type="match status" value="1"/>
</dbReference>
<dbReference type="PANTHER" id="PTHR42916">
    <property type="entry name" value="2-SUCCINYL-5-ENOLPYRUVYL-6-HYDROXY-3-CYCLOHEXENE-1-CARBOXYLATE SYNTHASE"/>
    <property type="match status" value="1"/>
</dbReference>
<dbReference type="PANTHER" id="PTHR42916:SF1">
    <property type="entry name" value="PROTEIN PHYLLO, CHLOROPLASTIC"/>
    <property type="match status" value="1"/>
</dbReference>
<dbReference type="Pfam" id="PF02775">
    <property type="entry name" value="TPP_enzyme_C"/>
    <property type="match status" value="1"/>
</dbReference>
<dbReference type="Pfam" id="PF16582">
    <property type="entry name" value="TPP_enzyme_M_2"/>
    <property type="match status" value="1"/>
</dbReference>
<dbReference type="Pfam" id="PF02776">
    <property type="entry name" value="TPP_enzyme_N"/>
    <property type="match status" value="1"/>
</dbReference>
<dbReference type="PIRSF" id="PIRSF004983">
    <property type="entry name" value="MenD"/>
    <property type="match status" value="1"/>
</dbReference>
<dbReference type="SUPFAM" id="SSF52467">
    <property type="entry name" value="DHS-like NAD/FAD-binding domain"/>
    <property type="match status" value="1"/>
</dbReference>
<dbReference type="SUPFAM" id="SSF52518">
    <property type="entry name" value="Thiamin diphosphate-binding fold (THDP-binding)"/>
    <property type="match status" value="2"/>
</dbReference>
<protein>
    <recommendedName>
        <fullName evidence="1">2-succinyl-5-enolpyruvyl-6-hydroxy-3-cyclohexene-1-carboxylate synthase</fullName>
        <shortName evidence="1">SEPHCHC synthase</shortName>
        <ecNumber evidence="1">2.2.1.9</ecNumber>
    </recommendedName>
    <alternativeName>
        <fullName evidence="1">Menaquinone biosynthesis protein MenD</fullName>
    </alternativeName>
</protein>
<feature type="chain" id="PRO_0000341834" description="2-succinyl-5-enolpyruvyl-6-hydroxy-3-cyclohexene-1-carboxylate synthase">
    <location>
        <begin position="1"/>
        <end position="573"/>
    </location>
</feature>
<gene>
    <name evidence="1" type="primary">menD</name>
    <name type="ordered locus">SO_4573</name>
</gene>
<reference key="1">
    <citation type="journal article" date="2002" name="Nat. Biotechnol.">
        <title>Genome sequence of the dissimilatory metal ion-reducing bacterium Shewanella oneidensis.</title>
        <authorList>
            <person name="Heidelberg J.F."/>
            <person name="Paulsen I.T."/>
            <person name="Nelson K.E."/>
            <person name="Gaidos E.J."/>
            <person name="Nelson W.C."/>
            <person name="Read T.D."/>
            <person name="Eisen J.A."/>
            <person name="Seshadri R."/>
            <person name="Ward N.L."/>
            <person name="Methe B.A."/>
            <person name="Clayton R.A."/>
            <person name="Meyer T."/>
            <person name="Tsapin A."/>
            <person name="Scott J."/>
            <person name="Beanan M.J."/>
            <person name="Brinkac L.M."/>
            <person name="Daugherty S.C."/>
            <person name="DeBoy R.T."/>
            <person name="Dodson R.J."/>
            <person name="Durkin A.S."/>
            <person name="Haft D.H."/>
            <person name="Kolonay J.F."/>
            <person name="Madupu R."/>
            <person name="Peterson J.D."/>
            <person name="Umayam L.A."/>
            <person name="White O."/>
            <person name="Wolf A.M."/>
            <person name="Vamathevan J.J."/>
            <person name="Weidman J.F."/>
            <person name="Impraim M."/>
            <person name="Lee K."/>
            <person name="Berry K.J."/>
            <person name="Lee C."/>
            <person name="Mueller J."/>
            <person name="Khouri H.M."/>
            <person name="Gill J."/>
            <person name="Utterback T.R."/>
            <person name="McDonald L.A."/>
            <person name="Feldblyum T.V."/>
            <person name="Smith H.O."/>
            <person name="Venter J.C."/>
            <person name="Nealson K.H."/>
            <person name="Fraser C.M."/>
        </authorList>
    </citation>
    <scope>NUCLEOTIDE SEQUENCE [LARGE SCALE GENOMIC DNA]</scope>
    <source>
        <strain>ATCC 700550 / JCM 31522 / CIP 106686 / LMG 19005 / NCIMB 14063 / MR-1</strain>
    </source>
</reference>
<organism>
    <name type="scientific">Shewanella oneidensis (strain ATCC 700550 / JCM 31522 / CIP 106686 / LMG 19005 / NCIMB 14063 / MR-1)</name>
    <dbReference type="NCBI Taxonomy" id="211586"/>
    <lineage>
        <taxon>Bacteria</taxon>
        <taxon>Pseudomonadati</taxon>
        <taxon>Pseudomonadota</taxon>
        <taxon>Gammaproteobacteria</taxon>
        <taxon>Alteromonadales</taxon>
        <taxon>Shewanellaceae</taxon>
        <taxon>Shewanella</taxon>
    </lineage>
</organism>
<accession>Q8E8T4</accession>
<evidence type="ECO:0000255" key="1">
    <source>
        <dbReference type="HAMAP-Rule" id="MF_01659"/>
    </source>
</evidence>